<evidence type="ECO:0000250" key="1"/>
<evidence type="ECO:0000250" key="2">
    <source>
        <dbReference type="UniProtKB" id="P25101"/>
    </source>
</evidence>
<evidence type="ECO:0000250" key="3">
    <source>
        <dbReference type="UniProtKB" id="P28088"/>
    </source>
</evidence>
<evidence type="ECO:0000255" key="4"/>
<evidence type="ECO:0000255" key="5">
    <source>
        <dbReference type="PROSITE-ProRule" id="PRU00521"/>
    </source>
</evidence>
<evidence type="ECO:0000305" key="6"/>
<sequence>METFWLRLSFWVALVGGVISDNPESYSTNLSIHVDSVATFHGTELSFVVTTHQPTNLALPSNGSMHNYCPQQTKITSAFKYINTVISCTIFIVGMVGNATLLRIIYQNKCMRNGPNALIASLALGDLIYVVIDLPINVFKLLAGRWPFEQNDFGVFLCKLFPFLQKSSVGITVLNLCALSVDRYRAVASWSRVQGIGIPLVTAIEIVSIWILSFILAIPEAIGFVMVPFEYKGAQHRTCMLNATSKFMEFYQDVKDWWLFGFYFCMPLVCTAIFYTLMTCEMLNRRNGSLRIALSEHLKQRREVAKTVFCLVVIFALCWFPLHLSRILKKTVYDEMDTNRCELLSFLLLMDYIGINLATMNSCINPIALYFVSKKFKNCFQSCLCCCCYQSKSLMTSVPMNGTSIQWKNHEQNNHNTERSSHKDSIN</sequence>
<keyword id="KW-1003">Cell membrane</keyword>
<keyword id="KW-1015">Disulfide bond</keyword>
<keyword id="KW-0297">G-protein coupled receptor</keyword>
<keyword id="KW-0325">Glycoprotein</keyword>
<keyword id="KW-0472">Membrane</keyword>
<keyword id="KW-0597">Phosphoprotein</keyword>
<keyword id="KW-0675">Receptor</keyword>
<keyword id="KW-1185">Reference proteome</keyword>
<keyword id="KW-0732">Signal</keyword>
<keyword id="KW-0807">Transducer</keyword>
<keyword id="KW-0812">Transmembrane</keyword>
<keyword id="KW-1133">Transmembrane helix</keyword>
<dbReference type="EMBL" id="X57765">
    <property type="protein sequence ID" value="CAA40917.1"/>
    <property type="molecule type" value="mRNA"/>
</dbReference>
<dbReference type="EMBL" id="BC133407">
    <property type="protein sequence ID" value="AAI33408.1"/>
    <property type="molecule type" value="mRNA"/>
</dbReference>
<dbReference type="EMBL" id="BC142309">
    <property type="protein sequence ID" value="AAI42310.1"/>
    <property type="molecule type" value="mRNA"/>
</dbReference>
<dbReference type="PIR" id="S13424">
    <property type="entry name" value="S13424"/>
</dbReference>
<dbReference type="RefSeq" id="NP_776733.1">
    <property type="nucleotide sequence ID" value="NM_174308.2"/>
</dbReference>
<dbReference type="SMR" id="P21450"/>
<dbReference type="FunCoup" id="P21450">
    <property type="interactions" value="459"/>
</dbReference>
<dbReference type="STRING" id="9913.ENSBTAP00000018173"/>
<dbReference type="BindingDB" id="P21450"/>
<dbReference type="ChEMBL" id="CHEMBL2806"/>
<dbReference type="GlyCosmos" id="P21450">
    <property type="glycosylation" value="2 sites, No reported glycans"/>
</dbReference>
<dbReference type="GlyGen" id="P21450">
    <property type="glycosylation" value="2 sites"/>
</dbReference>
<dbReference type="PaxDb" id="9913-ENSBTAP00000018173"/>
<dbReference type="Ensembl" id="ENSBTAT00000018173.7">
    <property type="protein sequence ID" value="ENSBTAP00000018173.5"/>
    <property type="gene ID" value="ENSBTAG00000013674.7"/>
</dbReference>
<dbReference type="GeneID" id="281749"/>
<dbReference type="KEGG" id="bta:281749"/>
<dbReference type="CTD" id="1909"/>
<dbReference type="VEuPathDB" id="HostDB:ENSBTAG00000013674"/>
<dbReference type="VGNC" id="VGNC:28329">
    <property type="gene designation" value="EDNRA"/>
</dbReference>
<dbReference type="eggNOG" id="KOG3656">
    <property type="taxonomic scope" value="Eukaryota"/>
</dbReference>
<dbReference type="GeneTree" id="ENSGT01120000271837"/>
<dbReference type="HOGENOM" id="CLU_009579_28_0_1"/>
<dbReference type="InParanoid" id="P21450"/>
<dbReference type="OMA" id="YNERDPG"/>
<dbReference type="OrthoDB" id="10049706at2759"/>
<dbReference type="TreeFam" id="TF331292"/>
<dbReference type="Reactome" id="R-BTA-375276">
    <property type="pathway name" value="Peptide ligand-binding receptors"/>
</dbReference>
<dbReference type="Reactome" id="R-BTA-416476">
    <property type="pathway name" value="G alpha (q) signalling events"/>
</dbReference>
<dbReference type="PRO" id="PR:P21450"/>
<dbReference type="Proteomes" id="UP000009136">
    <property type="component" value="Chromosome 17"/>
</dbReference>
<dbReference type="Bgee" id="ENSBTAG00000013674">
    <property type="expression patterns" value="Expressed in dorsal thalamus and 102 other cell types or tissues"/>
</dbReference>
<dbReference type="GO" id="GO:0005886">
    <property type="term" value="C:plasma membrane"/>
    <property type="evidence" value="ECO:0000318"/>
    <property type="project" value="GO_Central"/>
</dbReference>
<dbReference type="GO" id="GO:0004962">
    <property type="term" value="F:endothelin receptor activity"/>
    <property type="evidence" value="ECO:0000318"/>
    <property type="project" value="GO_Central"/>
</dbReference>
<dbReference type="GO" id="GO:0007193">
    <property type="term" value="P:adenylate cyclase-inhibiting G protein-coupled receptor signaling pathway"/>
    <property type="evidence" value="ECO:0007669"/>
    <property type="project" value="Ensembl"/>
</dbReference>
<dbReference type="GO" id="GO:0035904">
    <property type="term" value="P:aorta development"/>
    <property type="evidence" value="ECO:0007669"/>
    <property type="project" value="Ensembl"/>
</dbReference>
<dbReference type="GO" id="GO:0014824">
    <property type="term" value="P:artery smooth muscle contraction"/>
    <property type="evidence" value="ECO:0007669"/>
    <property type="project" value="Ensembl"/>
</dbReference>
<dbReference type="GO" id="GO:0003228">
    <property type="term" value="P:atrial cardiac muscle tissue development"/>
    <property type="evidence" value="ECO:0007669"/>
    <property type="project" value="Ensembl"/>
</dbReference>
<dbReference type="GO" id="GO:0048675">
    <property type="term" value="P:axon extension"/>
    <property type="evidence" value="ECO:0007669"/>
    <property type="project" value="Ensembl"/>
</dbReference>
<dbReference type="GO" id="GO:0060385">
    <property type="term" value="P:axonogenesis involved in innervation"/>
    <property type="evidence" value="ECO:0007669"/>
    <property type="project" value="Ensembl"/>
</dbReference>
<dbReference type="GO" id="GO:0001974">
    <property type="term" value="P:blood vessel remodeling"/>
    <property type="evidence" value="ECO:0007669"/>
    <property type="project" value="Ensembl"/>
</dbReference>
<dbReference type="GO" id="GO:0001569">
    <property type="term" value="P:branching involved in blood vessel morphogenesis"/>
    <property type="evidence" value="ECO:0007669"/>
    <property type="project" value="Ensembl"/>
</dbReference>
<dbReference type="GO" id="GO:0070588">
    <property type="term" value="P:calcium ion transmembrane transport"/>
    <property type="evidence" value="ECO:0007669"/>
    <property type="project" value="Ensembl"/>
</dbReference>
<dbReference type="GO" id="GO:0141156">
    <property type="term" value="P:cAMP/PKA signal transduction"/>
    <property type="evidence" value="ECO:0007669"/>
    <property type="project" value="Ensembl"/>
</dbReference>
<dbReference type="GO" id="GO:0060070">
    <property type="term" value="P:canonical Wnt signaling pathway"/>
    <property type="evidence" value="ECO:0007669"/>
    <property type="project" value="Ensembl"/>
</dbReference>
<dbReference type="GO" id="GO:0003207">
    <property type="term" value="P:cardiac chamber formation"/>
    <property type="evidence" value="ECO:0007669"/>
    <property type="project" value="Ensembl"/>
</dbReference>
<dbReference type="GO" id="GO:0003253">
    <property type="term" value="P:cardiac neural crest cell migration involved in outflow tract morphogenesis"/>
    <property type="evidence" value="ECO:0007669"/>
    <property type="project" value="Ensembl"/>
</dbReference>
<dbReference type="GO" id="GO:0071372">
    <property type="term" value="P:cellular response to follicle-stimulating hormone stimulus"/>
    <property type="evidence" value="ECO:0007669"/>
    <property type="project" value="Ensembl"/>
</dbReference>
<dbReference type="GO" id="GO:0044751">
    <property type="term" value="P:cellular response to human chorionic gonadotropin stimulus"/>
    <property type="evidence" value="ECO:0007669"/>
    <property type="project" value="Ensembl"/>
</dbReference>
<dbReference type="GO" id="GO:0071373">
    <property type="term" value="P:cellular response to luteinizing hormone stimulus"/>
    <property type="evidence" value="ECO:0007669"/>
    <property type="project" value="Ensembl"/>
</dbReference>
<dbReference type="GO" id="GO:0034599">
    <property type="term" value="P:cellular response to oxidative stress"/>
    <property type="evidence" value="ECO:0007669"/>
    <property type="project" value="Ensembl"/>
</dbReference>
<dbReference type="GO" id="GO:0097237">
    <property type="term" value="P:cellular response to toxic substance"/>
    <property type="evidence" value="ECO:0007669"/>
    <property type="project" value="Ensembl"/>
</dbReference>
<dbReference type="GO" id="GO:1904888">
    <property type="term" value="P:cranial skeletal system development"/>
    <property type="evidence" value="ECO:0007669"/>
    <property type="project" value="Ensembl"/>
</dbReference>
<dbReference type="GO" id="GO:0048066">
    <property type="term" value="P:developmental pigmentation"/>
    <property type="evidence" value="ECO:0000318"/>
    <property type="project" value="GO_Central"/>
</dbReference>
<dbReference type="GO" id="GO:0035050">
    <property type="term" value="P:embryonic heart tube development"/>
    <property type="evidence" value="ECO:0007669"/>
    <property type="project" value="Ensembl"/>
</dbReference>
<dbReference type="GO" id="GO:0048706">
    <property type="term" value="P:embryonic skeletal system development"/>
    <property type="evidence" value="ECO:0007669"/>
    <property type="project" value="Ensembl"/>
</dbReference>
<dbReference type="GO" id="GO:0086100">
    <property type="term" value="P:endothelin receptor signaling pathway"/>
    <property type="evidence" value="ECO:0000318"/>
    <property type="project" value="GO_Central"/>
</dbReference>
<dbReference type="GO" id="GO:0086101">
    <property type="term" value="P:endothelin receptor signaling pathway involved in heart process"/>
    <property type="evidence" value="ECO:0007669"/>
    <property type="project" value="Ensembl"/>
</dbReference>
<dbReference type="GO" id="GO:0048484">
    <property type="term" value="P:enteric nervous system development"/>
    <property type="evidence" value="ECO:0007669"/>
    <property type="project" value="InterPro"/>
</dbReference>
<dbReference type="GO" id="GO:0061028">
    <property type="term" value="P:establishment of endothelial barrier"/>
    <property type="evidence" value="ECO:0007669"/>
    <property type="project" value="Ensembl"/>
</dbReference>
<dbReference type="GO" id="GO:0060324">
    <property type="term" value="P:face development"/>
    <property type="evidence" value="ECO:0007669"/>
    <property type="project" value="Ensembl"/>
</dbReference>
<dbReference type="GO" id="GO:0010467">
    <property type="term" value="P:gene expression"/>
    <property type="evidence" value="ECO:0007669"/>
    <property type="project" value="Ensembl"/>
</dbReference>
<dbReference type="GO" id="GO:0072011">
    <property type="term" value="P:glomerular endothelium development"/>
    <property type="evidence" value="ECO:0007669"/>
    <property type="project" value="Ensembl"/>
</dbReference>
<dbReference type="GO" id="GO:0003094">
    <property type="term" value="P:glomerular filtration"/>
    <property type="evidence" value="ECO:0007669"/>
    <property type="project" value="Ensembl"/>
</dbReference>
<dbReference type="GO" id="GO:0030202">
    <property type="term" value="P:heparin proteoglycan metabolic process"/>
    <property type="evidence" value="ECO:0007669"/>
    <property type="project" value="Ensembl"/>
</dbReference>
<dbReference type="GO" id="GO:0001701">
    <property type="term" value="P:in utero embryonic development"/>
    <property type="evidence" value="ECO:0007669"/>
    <property type="project" value="Ensembl"/>
</dbReference>
<dbReference type="GO" id="GO:0006874">
    <property type="term" value="P:intracellular calcium ion homeostasis"/>
    <property type="evidence" value="ECO:0007669"/>
    <property type="project" value="Ensembl"/>
</dbReference>
<dbReference type="GO" id="GO:0003220">
    <property type="term" value="P:left ventricular cardiac muscle tissue morphogenesis"/>
    <property type="evidence" value="ECO:0007669"/>
    <property type="project" value="Ensembl"/>
</dbReference>
<dbReference type="GO" id="GO:1903537">
    <property type="term" value="P:meiotic cell cycle process involved in oocyte maturation"/>
    <property type="evidence" value="ECO:0007669"/>
    <property type="project" value="Ensembl"/>
</dbReference>
<dbReference type="GO" id="GO:0097152">
    <property type="term" value="P:mesenchymal cell apoptotic process"/>
    <property type="evidence" value="ECO:0007669"/>
    <property type="project" value="Ensembl"/>
</dbReference>
<dbReference type="GO" id="GO:0042474">
    <property type="term" value="P:middle ear morphogenesis"/>
    <property type="evidence" value="ECO:0007669"/>
    <property type="project" value="Ensembl"/>
</dbReference>
<dbReference type="GO" id="GO:0007005">
    <property type="term" value="P:mitochondrion organization"/>
    <property type="evidence" value="ECO:0007669"/>
    <property type="project" value="Ensembl"/>
</dbReference>
<dbReference type="GO" id="GO:0000278">
    <property type="term" value="P:mitotic cell cycle"/>
    <property type="evidence" value="ECO:0007669"/>
    <property type="project" value="Ensembl"/>
</dbReference>
<dbReference type="GO" id="GO:0014034">
    <property type="term" value="P:neural crest cell fate commitment"/>
    <property type="evidence" value="ECO:0007669"/>
    <property type="project" value="Ensembl"/>
</dbReference>
<dbReference type="GO" id="GO:0050905">
    <property type="term" value="P:neuromuscular process"/>
    <property type="evidence" value="ECO:0007669"/>
    <property type="project" value="Ensembl"/>
</dbReference>
<dbReference type="GO" id="GO:0016322">
    <property type="term" value="P:neuron remodeling"/>
    <property type="evidence" value="ECO:0007669"/>
    <property type="project" value="Ensembl"/>
</dbReference>
<dbReference type="GO" id="GO:0003357">
    <property type="term" value="P:noradrenergic neuron differentiation"/>
    <property type="evidence" value="ECO:0007669"/>
    <property type="project" value="Ensembl"/>
</dbReference>
<dbReference type="GO" id="GO:0042415">
    <property type="term" value="P:norepinephrine metabolic process"/>
    <property type="evidence" value="ECO:0007669"/>
    <property type="project" value="Ensembl"/>
</dbReference>
<dbReference type="GO" id="GO:0061626">
    <property type="term" value="P:pharyngeal arch artery morphogenesis"/>
    <property type="evidence" value="ECO:0007669"/>
    <property type="project" value="Ensembl"/>
</dbReference>
<dbReference type="GO" id="GO:1903210">
    <property type="term" value="P:podocyte apoptotic process"/>
    <property type="evidence" value="ECO:0007669"/>
    <property type="project" value="Ensembl"/>
</dbReference>
<dbReference type="GO" id="GO:0072112">
    <property type="term" value="P:podocyte differentiation"/>
    <property type="evidence" value="ECO:0007669"/>
    <property type="project" value="Ensembl"/>
</dbReference>
<dbReference type="GO" id="GO:0043123">
    <property type="term" value="P:positive regulation of canonical NF-kappaB signal transduction"/>
    <property type="evidence" value="ECO:0007669"/>
    <property type="project" value="Ensembl"/>
</dbReference>
<dbReference type="GO" id="GO:0071806">
    <property type="term" value="P:protein transmembrane transport"/>
    <property type="evidence" value="ECO:0007669"/>
    <property type="project" value="Ensembl"/>
</dbReference>
<dbReference type="GO" id="GO:0008217">
    <property type="term" value="P:regulation of blood pressure"/>
    <property type="evidence" value="ECO:0007669"/>
    <property type="project" value="Ensembl"/>
</dbReference>
<dbReference type="GO" id="GO:0010827">
    <property type="term" value="P:regulation of D-glucose transmembrane transport"/>
    <property type="evidence" value="ECO:0007669"/>
    <property type="project" value="Ensembl"/>
</dbReference>
<dbReference type="GO" id="GO:0002027">
    <property type="term" value="P:regulation of heart rate"/>
    <property type="evidence" value="ECO:0007669"/>
    <property type="project" value="Ensembl"/>
</dbReference>
<dbReference type="GO" id="GO:1905871">
    <property type="term" value="P:regulation of protein localization to cell leading edge"/>
    <property type="evidence" value="ECO:0007669"/>
    <property type="project" value="Ensembl"/>
</dbReference>
<dbReference type="GO" id="GO:0097018">
    <property type="term" value="P:renal albumin absorption"/>
    <property type="evidence" value="ECO:0007669"/>
    <property type="project" value="Ensembl"/>
</dbReference>
<dbReference type="GO" id="GO:0070294">
    <property type="term" value="P:renal sodium ion absorption"/>
    <property type="evidence" value="ECO:0007669"/>
    <property type="project" value="Ensembl"/>
</dbReference>
<dbReference type="GO" id="GO:0007585">
    <property type="term" value="P:respiratory gaseous exchange by respiratory system"/>
    <property type="evidence" value="ECO:0007669"/>
    <property type="project" value="Ensembl"/>
</dbReference>
<dbReference type="GO" id="GO:1905144">
    <property type="term" value="P:response to acetylcholine"/>
    <property type="evidence" value="ECO:0007669"/>
    <property type="project" value="Ensembl"/>
</dbReference>
<dbReference type="GO" id="GO:0001975">
    <property type="term" value="P:response to amphetamine"/>
    <property type="evidence" value="ECO:0007669"/>
    <property type="project" value="Ensembl"/>
</dbReference>
<dbReference type="GO" id="GO:0001666">
    <property type="term" value="P:response to hypoxia"/>
    <property type="evidence" value="ECO:0007669"/>
    <property type="project" value="Ensembl"/>
</dbReference>
<dbReference type="GO" id="GO:0009611">
    <property type="term" value="P:response to wounding"/>
    <property type="evidence" value="ECO:0007669"/>
    <property type="project" value="Ensembl"/>
</dbReference>
<dbReference type="GO" id="GO:1902287">
    <property type="term" value="P:semaphorin-plexin signaling pathway involved in axon guidance"/>
    <property type="evidence" value="ECO:0007669"/>
    <property type="project" value="Ensembl"/>
</dbReference>
<dbReference type="GO" id="GO:0055078">
    <property type="term" value="P:sodium ion homeostasis"/>
    <property type="evidence" value="ECO:0007669"/>
    <property type="project" value="Ensembl"/>
</dbReference>
<dbReference type="GO" id="GO:0048485">
    <property type="term" value="P:sympathetic nervous system development"/>
    <property type="evidence" value="ECO:0007669"/>
    <property type="project" value="Ensembl"/>
</dbReference>
<dbReference type="GO" id="GO:0097492">
    <property type="term" value="P:sympathetic neuron axon guidance"/>
    <property type="evidence" value="ECO:0007669"/>
    <property type="project" value="Ensembl"/>
</dbReference>
<dbReference type="GO" id="GO:0030878">
    <property type="term" value="P:thyroid gland development"/>
    <property type="evidence" value="ECO:0007669"/>
    <property type="project" value="Ensembl"/>
</dbReference>
<dbReference type="GO" id="GO:0097084">
    <property type="term" value="P:vascular associated smooth muscle cell development"/>
    <property type="evidence" value="ECO:0007669"/>
    <property type="project" value="Ensembl"/>
</dbReference>
<dbReference type="GO" id="GO:0042310">
    <property type="term" value="P:vasoconstriction"/>
    <property type="evidence" value="ECO:0000318"/>
    <property type="project" value="GO_Central"/>
</dbReference>
<dbReference type="CDD" id="cd15975">
    <property type="entry name" value="7tmA_ET-AR"/>
    <property type="match status" value="1"/>
</dbReference>
<dbReference type="FunFam" id="1.20.1070.10:FF:000076">
    <property type="entry name" value="Endothelin receptor type B"/>
    <property type="match status" value="1"/>
</dbReference>
<dbReference type="Gene3D" id="1.20.1070.10">
    <property type="entry name" value="Rhodopsin 7-helix transmembrane proteins"/>
    <property type="match status" value="1"/>
</dbReference>
<dbReference type="InterPro" id="IPR000499">
    <property type="entry name" value="Endthln_rcpt"/>
</dbReference>
<dbReference type="InterPro" id="IPR002175">
    <property type="entry name" value="ETA_rcpt"/>
</dbReference>
<dbReference type="InterPro" id="IPR051193">
    <property type="entry name" value="GPCR_endothelin_rcpt"/>
</dbReference>
<dbReference type="InterPro" id="IPR000276">
    <property type="entry name" value="GPCR_Rhodpsn"/>
</dbReference>
<dbReference type="InterPro" id="IPR017452">
    <property type="entry name" value="GPCR_Rhodpsn_7TM"/>
</dbReference>
<dbReference type="PANTHER" id="PTHR46099:SF2">
    <property type="entry name" value="ENDOTHELIN-1 RECEPTOR"/>
    <property type="match status" value="1"/>
</dbReference>
<dbReference type="PANTHER" id="PTHR46099">
    <property type="entry name" value="G_PROTEIN_RECEP_F1_2 DOMAIN-CONTAINING PROTEIN"/>
    <property type="match status" value="1"/>
</dbReference>
<dbReference type="Pfam" id="PF00001">
    <property type="entry name" value="7tm_1"/>
    <property type="match status" value="1"/>
</dbReference>
<dbReference type="PRINTS" id="PR00570">
    <property type="entry name" value="ENDOTHELINAR"/>
</dbReference>
<dbReference type="PRINTS" id="PR00366">
    <property type="entry name" value="ENDOTHELINR"/>
</dbReference>
<dbReference type="PRINTS" id="PR00237">
    <property type="entry name" value="GPCRRHODOPSN"/>
</dbReference>
<dbReference type="SUPFAM" id="SSF81321">
    <property type="entry name" value="Family A G protein-coupled receptor-like"/>
    <property type="match status" value="1"/>
</dbReference>
<dbReference type="PROSITE" id="PS00237">
    <property type="entry name" value="G_PROTEIN_RECEP_F1_1"/>
    <property type="match status" value="1"/>
</dbReference>
<dbReference type="PROSITE" id="PS50262">
    <property type="entry name" value="G_PROTEIN_RECEP_F1_2"/>
    <property type="match status" value="1"/>
</dbReference>
<protein>
    <recommendedName>
        <fullName evidence="6">Endothelin-1 receptor</fullName>
    </recommendedName>
    <alternativeName>
        <fullName evidence="2">Endothelin receptor type A</fullName>
        <shortName>ET-A</shortName>
        <shortName>ET-AR</shortName>
    </alternativeName>
</protein>
<feature type="signal peptide" evidence="4">
    <location>
        <begin position="1"/>
        <end position="20"/>
    </location>
</feature>
<feature type="chain" id="PRO_0000012719" description="Endothelin-1 receptor">
    <location>
        <begin position="21"/>
        <end position="427"/>
    </location>
</feature>
<feature type="topological domain" description="Extracellular" evidence="4">
    <location>
        <begin position="21"/>
        <end position="80"/>
    </location>
</feature>
<feature type="transmembrane region" description="Helical; Name=1" evidence="4">
    <location>
        <begin position="81"/>
        <end position="102"/>
    </location>
</feature>
<feature type="topological domain" description="Cytoplasmic" evidence="4">
    <location>
        <begin position="103"/>
        <end position="112"/>
    </location>
</feature>
<feature type="transmembrane region" description="Helical; Name=2" evidence="4">
    <location>
        <begin position="113"/>
        <end position="132"/>
    </location>
</feature>
<feature type="topological domain" description="Extracellular" evidence="4">
    <location>
        <begin position="133"/>
        <end position="159"/>
    </location>
</feature>
<feature type="transmembrane region" description="Helical; Name=3" evidence="4">
    <location>
        <begin position="160"/>
        <end position="181"/>
    </location>
</feature>
<feature type="topological domain" description="Cytoplasmic" evidence="4">
    <location>
        <begin position="182"/>
        <end position="205"/>
    </location>
</feature>
<feature type="transmembrane region" description="Helical; Name=4" evidence="4">
    <location>
        <begin position="206"/>
        <end position="229"/>
    </location>
</feature>
<feature type="topological domain" description="Extracellular" evidence="4">
    <location>
        <begin position="230"/>
        <end position="256"/>
    </location>
</feature>
<feature type="transmembrane region" description="Helical; Name=5" evidence="4">
    <location>
        <begin position="257"/>
        <end position="278"/>
    </location>
</feature>
<feature type="topological domain" description="Cytoplasmic" evidence="4">
    <location>
        <begin position="279"/>
        <end position="306"/>
    </location>
</feature>
<feature type="transmembrane region" description="Helical; Name=6" evidence="4">
    <location>
        <begin position="307"/>
        <end position="328"/>
    </location>
</feature>
<feature type="topological domain" description="Extracellular" evidence="4">
    <location>
        <begin position="329"/>
        <end position="347"/>
    </location>
</feature>
<feature type="transmembrane region" description="Helical; Name=7" evidence="4">
    <location>
        <begin position="348"/>
        <end position="372"/>
    </location>
</feature>
<feature type="topological domain" description="Cytoplasmic" evidence="4">
    <location>
        <begin position="373"/>
        <end position="427"/>
    </location>
</feature>
<feature type="modified residue" description="Phosphoserine" evidence="3">
    <location>
        <position position="425"/>
    </location>
</feature>
<feature type="glycosylation site" description="N-linked (GlcNAc...) asparagine" evidence="4">
    <location>
        <position position="29"/>
    </location>
</feature>
<feature type="glycosylation site" description="N-linked (GlcNAc...) asparagine" evidence="4">
    <location>
        <position position="62"/>
    </location>
</feature>
<feature type="disulfide bond" evidence="5">
    <location>
        <begin position="158"/>
        <end position="239"/>
    </location>
</feature>
<organism>
    <name type="scientific">Bos taurus</name>
    <name type="common">Bovine</name>
    <dbReference type="NCBI Taxonomy" id="9913"/>
    <lineage>
        <taxon>Eukaryota</taxon>
        <taxon>Metazoa</taxon>
        <taxon>Chordata</taxon>
        <taxon>Craniata</taxon>
        <taxon>Vertebrata</taxon>
        <taxon>Euteleostomi</taxon>
        <taxon>Mammalia</taxon>
        <taxon>Eutheria</taxon>
        <taxon>Laurasiatheria</taxon>
        <taxon>Artiodactyla</taxon>
        <taxon>Ruminantia</taxon>
        <taxon>Pecora</taxon>
        <taxon>Bovidae</taxon>
        <taxon>Bovinae</taxon>
        <taxon>Bos</taxon>
    </lineage>
</organism>
<comment type="function">
    <text>Receptor for endothelin-1. Mediates its action by association with G proteins that activate a phosphatidylinositol-calcium second messenger system. The rank order of binding affinities for ET-A is: ET1 &gt; ET2 &gt;&gt; ET3.</text>
</comment>
<comment type="subunit">
    <text evidence="1">Interacts with HDAC7 and KAT5.</text>
</comment>
<comment type="subcellular location">
    <subcellularLocation>
        <location>Cell membrane</location>
        <topology>Multi-pass membrane protein</topology>
    </subcellularLocation>
</comment>
<comment type="similarity">
    <text evidence="5">Belongs to the G-protein coupled receptor 1 family. Endothelin receptor subfamily. EDNRA sub-subfamily.</text>
</comment>
<gene>
    <name evidence="2" type="primary">EDNRA</name>
</gene>
<accession>P21450</accession>
<accession>A3KMY5</accession>
<accession>A5PK08</accession>
<proteinExistence type="evidence at transcript level"/>
<name>EDNRA_BOVIN</name>
<reference key="1">
    <citation type="journal article" date="1990" name="Nature">
        <title>Cloning and expression of a cDNA encoding an endothelin receptor.</title>
        <authorList>
            <person name="Arai H."/>
            <person name="Hori S."/>
            <person name="Aramori I."/>
            <person name="Ohkubo H."/>
            <person name="Nakanishi S."/>
        </authorList>
    </citation>
    <scope>NUCLEOTIDE SEQUENCE [MRNA]</scope>
    <source>
        <tissue>Lung</tissue>
    </source>
</reference>
<reference key="2">
    <citation type="submission" date="2007-02" db="EMBL/GenBank/DDBJ databases">
        <authorList>
            <consortium name="NIH - Mammalian Gene Collection (MGC) project"/>
        </authorList>
    </citation>
    <scope>NUCLEOTIDE SEQUENCE [LARGE SCALE MRNA]</scope>
    <source>
        <strain>Hereford</strain>
        <tissue>Fetal skin</tissue>
        <tissue>Thymus</tissue>
    </source>
</reference>